<name>SYP_STAS1</name>
<dbReference type="EC" id="6.1.1.15" evidence="1"/>
<dbReference type="EMBL" id="AP008934">
    <property type="protein sequence ID" value="BAE18650.1"/>
    <property type="molecule type" value="Genomic_DNA"/>
</dbReference>
<dbReference type="RefSeq" id="WP_011303259.1">
    <property type="nucleotide sequence ID" value="NC_007350.1"/>
</dbReference>
<dbReference type="SMR" id="Q49X48"/>
<dbReference type="GeneID" id="23779956"/>
<dbReference type="KEGG" id="ssp:SSP1505"/>
<dbReference type="PATRIC" id="fig|342451.11.peg.1507"/>
<dbReference type="eggNOG" id="COG0442">
    <property type="taxonomic scope" value="Bacteria"/>
</dbReference>
<dbReference type="HOGENOM" id="CLU_016739_0_0_9"/>
<dbReference type="OrthoDB" id="9809052at2"/>
<dbReference type="Proteomes" id="UP000006371">
    <property type="component" value="Chromosome"/>
</dbReference>
<dbReference type="GO" id="GO:0005829">
    <property type="term" value="C:cytosol"/>
    <property type="evidence" value="ECO:0007669"/>
    <property type="project" value="TreeGrafter"/>
</dbReference>
<dbReference type="GO" id="GO:0002161">
    <property type="term" value="F:aminoacyl-tRNA deacylase activity"/>
    <property type="evidence" value="ECO:0007669"/>
    <property type="project" value="InterPro"/>
</dbReference>
<dbReference type="GO" id="GO:0005524">
    <property type="term" value="F:ATP binding"/>
    <property type="evidence" value="ECO:0007669"/>
    <property type="project" value="UniProtKB-UniRule"/>
</dbReference>
<dbReference type="GO" id="GO:0140096">
    <property type="term" value="F:catalytic activity, acting on a protein"/>
    <property type="evidence" value="ECO:0007669"/>
    <property type="project" value="UniProtKB-ARBA"/>
</dbReference>
<dbReference type="GO" id="GO:0004827">
    <property type="term" value="F:proline-tRNA ligase activity"/>
    <property type="evidence" value="ECO:0007669"/>
    <property type="project" value="UniProtKB-UniRule"/>
</dbReference>
<dbReference type="GO" id="GO:0016740">
    <property type="term" value="F:transferase activity"/>
    <property type="evidence" value="ECO:0007669"/>
    <property type="project" value="UniProtKB-ARBA"/>
</dbReference>
<dbReference type="GO" id="GO:0006433">
    <property type="term" value="P:prolyl-tRNA aminoacylation"/>
    <property type="evidence" value="ECO:0007669"/>
    <property type="project" value="UniProtKB-UniRule"/>
</dbReference>
<dbReference type="CDD" id="cd04334">
    <property type="entry name" value="ProRS-INS"/>
    <property type="match status" value="1"/>
</dbReference>
<dbReference type="CDD" id="cd00861">
    <property type="entry name" value="ProRS_anticodon_short"/>
    <property type="match status" value="1"/>
</dbReference>
<dbReference type="CDD" id="cd00779">
    <property type="entry name" value="ProRS_core_prok"/>
    <property type="match status" value="1"/>
</dbReference>
<dbReference type="FunFam" id="3.30.930.10:FF:000043">
    <property type="entry name" value="Proline--tRNA ligase"/>
    <property type="match status" value="1"/>
</dbReference>
<dbReference type="FunFam" id="3.40.50.800:FF:000011">
    <property type="entry name" value="Proline--tRNA ligase"/>
    <property type="match status" value="1"/>
</dbReference>
<dbReference type="Gene3D" id="3.40.50.800">
    <property type="entry name" value="Anticodon-binding domain"/>
    <property type="match status" value="1"/>
</dbReference>
<dbReference type="Gene3D" id="3.30.930.10">
    <property type="entry name" value="Bira Bifunctional Protein, Domain 2"/>
    <property type="match status" value="2"/>
</dbReference>
<dbReference type="Gene3D" id="3.90.960.10">
    <property type="entry name" value="YbaK/aminoacyl-tRNA synthetase-associated domain"/>
    <property type="match status" value="1"/>
</dbReference>
<dbReference type="HAMAP" id="MF_01569">
    <property type="entry name" value="Pro_tRNA_synth_type1"/>
    <property type="match status" value="1"/>
</dbReference>
<dbReference type="InterPro" id="IPR002314">
    <property type="entry name" value="aa-tRNA-synt_IIb"/>
</dbReference>
<dbReference type="InterPro" id="IPR006195">
    <property type="entry name" value="aa-tRNA-synth_II"/>
</dbReference>
<dbReference type="InterPro" id="IPR045864">
    <property type="entry name" value="aa-tRNA-synth_II/BPL/LPL"/>
</dbReference>
<dbReference type="InterPro" id="IPR004154">
    <property type="entry name" value="Anticodon-bd"/>
</dbReference>
<dbReference type="InterPro" id="IPR036621">
    <property type="entry name" value="Anticodon-bd_dom_sf"/>
</dbReference>
<dbReference type="InterPro" id="IPR002316">
    <property type="entry name" value="Pro-tRNA-ligase_IIa"/>
</dbReference>
<dbReference type="InterPro" id="IPR004500">
    <property type="entry name" value="Pro-tRNA-synth_IIa_bac-type"/>
</dbReference>
<dbReference type="InterPro" id="IPR023717">
    <property type="entry name" value="Pro-tRNA-Synthase_IIa_type1"/>
</dbReference>
<dbReference type="InterPro" id="IPR050062">
    <property type="entry name" value="Pro-tRNA_synthetase"/>
</dbReference>
<dbReference type="InterPro" id="IPR044140">
    <property type="entry name" value="ProRS_anticodon_short"/>
</dbReference>
<dbReference type="InterPro" id="IPR033730">
    <property type="entry name" value="ProRS_core_prok"/>
</dbReference>
<dbReference type="InterPro" id="IPR036754">
    <property type="entry name" value="YbaK/aa-tRNA-synt-asso_dom_sf"/>
</dbReference>
<dbReference type="InterPro" id="IPR007214">
    <property type="entry name" value="YbaK/aa-tRNA-synth-assoc-dom"/>
</dbReference>
<dbReference type="NCBIfam" id="NF006625">
    <property type="entry name" value="PRK09194.1"/>
    <property type="match status" value="1"/>
</dbReference>
<dbReference type="NCBIfam" id="TIGR00409">
    <property type="entry name" value="proS_fam_II"/>
    <property type="match status" value="1"/>
</dbReference>
<dbReference type="PANTHER" id="PTHR42753">
    <property type="entry name" value="MITOCHONDRIAL RIBOSOME PROTEIN L39/PROLYL-TRNA LIGASE FAMILY MEMBER"/>
    <property type="match status" value="1"/>
</dbReference>
<dbReference type="PANTHER" id="PTHR42753:SF2">
    <property type="entry name" value="PROLINE--TRNA LIGASE"/>
    <property type="match status" value="1"/>
</dbReference>
<dbReference type="Pfam" id="PF03129">
    <property type="entry name" value="HGTP_anticodon"/>
    <property type="match status" value="1"/>
</dbReference>
<dbReference type="Pfam" id="PF00587">
    <property type="entry name" value="tRNA-synt_2b"/>
    <property type="match status" value="1"/>
</dbReference>
<dbReference type="Pfam" id="PF04073">
    <property type="entry name" value="tRNA_edit"/>
    <property type="match status" value="1"/>
</dbReference>
<dbReference type="PRINTS" id="PR01046">
    <property type="entry name" value="TRNASYNTHPRO"/>
</dbReference>
<dbReference type="SUPFAM" id="SSF52954">
    <property type="entry name" value="Class II aaRS ABD-related"/>
    <property type="match status" value="1"/>
</dbReference>
<dbReference type="SUPFAM" id="SSF55681">
    <property type="entry name" value="Class II aaRS and biotin synthetases"/>
    <property type="match status" value="1"/>
</dbReference>
<dbReference type="SUPFAM" id="SSF55826">
    <property type="entry name" value="YbaK/ProRS associated domain"/>
    <property type="match status" value="1"/>
</dbReference>
<dbReference type="PROSITE" id="PS50862">
    <property type="entry name" value="AA_TRNA_LIGASE_II"/>
    <property type="match status" value="1"/>
</dbReference>
<gene>
    <name evidence="1" type="primary">proS</name>
    <name type="ordered locus">SSP1505</name>
</gene>
<feature type="chain" id="PRO_0000248772" description="Proline--tRNA ligase">
    <location>
        <begin position="1"/>
        <end position="566"/>
    </location>
</feature>
<comment type="function">
    <text evidence="1">Catalyzes the attachment of proline to tRNA(Pro) in a two-step reaction: proline is first activated by ATP to form Pro-AMP and then transferred to the acceptor end of tRNA(Pro). As ProRS can inadvertently accommodate and process non-cognate amino acids such as alanine and cysteine, to avoid such errors it has two additional distinct editing activities against alanine. One activity is designated as 'pretransfer' editing and involves the tRNA(Pro)-independent hydrolysis of activated Ala-AMP. The other activity is designated 'posttransfer' editing and involves deacylation of mischarged Ala-tRNA(Pro). The misacylated Cys-tRNA(Pro) is not edited by ProRS.</text>
</comment>
<comment type="catalytic activity">
    <reaction evidence="1">
        <text>tRNA(Pro) + L-proline + ATP = L-prolyl-tRNA(Pro) + AMP + diphosphate</text>
        <dbReference type="Rhea" id="RHEA:14305"/>
        <dbReference type="Rhea" id="RHEA-COMP:9700"/>
        <dbReference type="Rhea" id="RHEA-COMP:9702"/>
        <dbReference type="ChEBI" id="CHEBI:30616"/>
        <dbReference type="ChEBI" id="CHEBI:33019"/>
        <dbReference type="ChEBI" id="CHEBI:60039"/>
        <dbReference type="ChEBI" id="CHEBI:78442"/>
        <dbReference type="ChEBI" id="CHEBI:78532"/>
        <dbReference type="ChEBI" id="CHEBI:456215"/>
        <dbReference type="EC" id="6.1.1.15"/>
    </reaction>
</comment>
<comment type="subunit">
    <text evidence="1">Homodimer.</text>
</comment>
<comment type="subcellular location">
    <subcellularLocation>
        <location evidence="1">Cytoplasm</location>
    </subcellularLocation>
</comment>
<comment type="domain">
    <text evidence="1">Consists of three domains: the N-terminal catalytic domain, the editing domain and the C-terminal anticodon-binding domain.</text>
</comment>
<comment type="similarity">
    <text evidence="1">Belongs to the class-II aminoacyl-tRNA synthetase family. ProS type 1 subfamily.</text>
</comment>
<reference key="1">
    <citation type="journal article" date="2005" name="Proc. Natl. Acad. Sci. U.S.A.">
        <title>Whole genome sequence of Staphylococcus saprophyticus reveals the pathogenesis of uncomplicated urinary tract infection.</title>
        <authorList>
            <person name="Kuroda M."/>
            <person name="Yamashita A."/>
            <person name="Hirakawa H."/>
            <person name="Kumano M."/>
            <person name="Morikawa K."/>
            <person name="Higashide M."/>
            <person name="Maruyama A."/>
            <person name="Inose Y."/>
            <person name="Matoba K."/>
            <person name="Toh H."/>
            <person name="Kuhara S."/>
            <person name="Hattori M."/>
            <person name="Ohta T."/>
        </authorList>
    </citation>
    <scope>NUCLEOTIDE SEQUENCE [LARGE SCALE GENOMIC DNA]</scope>
    <source>
        <strain>ATCC 15305 / DSM 20229 / NCIMB 8711 / NCTC 7292 / S-41</strain>
    </source>
</reference>
<protein>
    <recommendedName>
        <fullName evidence="1">Proline--tRNA ligase</fullName>
        <ecNumber evidence="1">6.1.1.15</ecNumber>
    </recommendedName>
    <alternativeName>
        <fullName evidence="1">Prolyl-tRNA synthetase</fullName>
        <shortName evidence="1">ProRS</shortName>
    </alternativeName>
</protein>
<keyword id="KW-0030">Aminoacyl-tRNA synthetase</keyword>
<keyword id="KW-0067">ATP-binding</keyword>
<keyword id="KW-0963">Cytoplasm</keyword>
<keyword id="KW-0436">Ligase</keyword>
<keyword id="KW-0547">Nucleotide-binding</keyword>
<keyword id="KW-0648">Protein biosynthesis</keyword>
<keyword id="KW-1185">Reference proteome</keyword>
<organism>
    <name type="scientific">Staphylococcus saprophyticus subsp. saprophyticus (strain ATCC 15305 / DSM 20229 / NCIMB 8711 / NCTC 7292 / S-41)</name>
    <dbReference type="NCBI Taxonomy" id="342451"/>
    <lineage>
        <taxon>Bacteria</taxon>
        <taxon>Bacillati</taxon>
        <taxon>Bacillota</taxon>
        <taxon>Bacilli</taxon>
        <taxon>Bacillales</taxon>
        <taxon>Staphylococcaceae</taxon>
        <taxon>Staphylococcus</taxon>
    </lineage>
</organism>
<evidence type="ECO:0000255" key="1">
    <source>
        <dbReference type="HAMAP-Rule" id="MF_01569"/>
    </source>
</evidence>
<sequence>MKQSKVFIPTMKEVPAGAEALSHRLLLKAGLIKQSTSGIYSYLPLAARVLNNIEAIVREEMERIDAVEILMPALQQAELWEESGRWSAYGPELMRLQDRNGREFALGPTHEEVVTSIVRDELKSYKQLPLTLFQIQSKYRDEKRPRFGLLRGREFIMKDAYSFHADEDSLDASYQDMYNAYGRIFKRVGINARPVVADSGAIGGSHTHEFMALSEIGEDTIVYSEQSDYAANIEKAEVVYQANEKHEDLQPLTKIETPNIHTAQELATFLDKPLDEITKSMVFKIDGEFIMVLVRGHHELNDIKLKAYFGTDNIELASEDEIVNLLGAKPGSLGPVFDKEIKVYADNFIQDLNNIVVGANEDGYHLLNANIGRDFEVDAFGDFRFILEGEPLSDGSGPARFAEGIEVGQVFKLGTKYSESMNATFLDNQGKAQPLLMGCYGIGVSRTLSAIVEQNNDENGIIWPKSVTPFDLHLITINPKKDDQRELADQLYTQLKENYDVLYDDRKERAGVKFNDADLIGLPVRVVVGKNAAEGIVEVKRRDTGESEDVHVDNLINYVNTLYSNI</sequence>
<accession>Q49X48</accession>
<proteinExistence type="inferred from homology"/>